<name>APAG_SALCH</name>
<evidence type="ECO:0000255" key="1">
    <source>
        <dbReference type="HAMAP-Rule" id="MF_00791"/>
    </source>
</evidence>
<sequence length="125" mass="13924">MINSPRVCIQVQSVYIEAQSSPDDERYVFAYTVTIRNLGRAPVQLLGRYWLITNGHGRETEVQGEGVVGVQPRIAPGEEYQYTSGAVIETPLGTMQGHYEMIDENGDAFTIDIPVFRLAVPTLIH</sequence>
<reference key="1">
    <citation type="journal article" date="2005" name="Nucleic Acids Res.">
        <title>The genome sequence of Salmonella enterica serovar Choleraesuis, a highly invasive and resistant zoonotic pathogen.</title>
        <authorList>
            <person name="Chiu C.-H."/>
            <person name="Tang P."/>
            <person name="Chu C."/>
            <person name="Hu S."/>
            <person name="Bao Q."/>
            <person name="Yu J."/>
            <person name="Chou Y.-Y."/>
            <person name="Wang H.-S."/>
            <person name="Lee Y.-S."/>
        </authorList>
    </citation>
    <scope>NUCLEOTIDE SEQUENCE [LARGE SCALE GENOMIC DNA]</scope>
    <source>
        <strain>SC-B67</strain>
    </source>
</reference>
<protein>
    <recommendedName>
        <fullName evidence="1">Protein ApaG</fullName>
    </recommendedName>
</protein>
<proteinExistence type="inferred from homology"/>
<dbReference type="EMBL" id="AE017220">
    <property type="protein sequence ID" value="AAX63990.1"/>
    <property type="molecule type" value="Genomic_DNA"/>
</dbReference>
<dbReference type="RefSeq" id="WP_000610894.1">
    <property type="nucleotide sequence ID" value="NC_006905.1"/>
</dbReference>
<dbReference type="SMR" id="Q57TH1"/>
<dbReference type="GeneID" id="66754612"/>
<dbReference type="KEGG" id="sec:SCH_0084"/>
<dbReference type="HOGENOM" id="CLU_128074_0_0_6"/>
<dbReference type="Proteomes" id="UP000000538">
    <property type="component" value="Chromosome"/>
</dbReference>
<dbReference type="GO" id="GO:0070987">
    <property type="term" value="P:error-free translesion synthesis"/>
    <property type="evidence" value="ECO:0007669"/>
    <property type="project" value="TreeGrafter"/>
</dbReference>
<dbReference type="Gene3D" id="2.60.40.1470">
    <property type="entry name" value="ApaG domain"/>
    <property type="match status" value="1"/>
</dbReference>
<dbReference type="HAMAP" id="MF_00791">
    <property type="entry name" value="ApaG"/>
    <property type="match status" value="1"/>
</dbReference>
<dbReference type="InterPro" id="IPR007474">
    <property type="entry name" value="ApaG_domain"/>
</dbReference>
<dbReference type="InterPro" id="IPR036767">
    <property type="entry name" value="ApaG_sf"/>
</dbReference>
<dbReference type="InterPro" id="IPR023065">
    <property type="entry name" value="Uncharacterised_ApaG"/>
</dbReference>
<dbReference type="NCBIfam" id="NF003967">
    <property type="entry name" value="PRK05461.1"/>
    <property type="match status" value="1"/>
</dbReference>
<dbReference type="PANTHER" id="PTHR14289">
    <property type="entry name" value="F-BOX ONLY PROTEIN 3"/>
    <property type="match status" value="1"/>
</dbReference>
<dbReference type="PANTHER" id="PTHR14289:SF16">
    <property type="entry name" value="POLYMERASE DELTA-INTERACTING PROTEIN 2"/>
    <property type="match status" value="1"/>
</dbReference>
<dbReference type="Pfam" id="PF04379">
    <property type="entry name" value="DUF525"/>
    <property type="match status" value="1"/>
</dbReference>
<dbReference type="SUPFAM" id="SSF110069">
    <property type="entry name" value="ApaG-like"/>
    <property type="match status" value="1"/>
</dbReference>
<dbReference type="PROSITE" id="PS51087">
    <property type="entry name" value="APAG"/>
    <property type="match status" value="1"/>
</dbReference>
<feature type="chain" id="PRO_1000083641" description="Protein ApaG">
    <location>
        <begin position="1"/>
        <end position="125"/>
    </location>
</feature>
<feature type="domain" description="ApaG" evidence="1">
    <location>
        <begin position="1"/>
        <end position="125"/>
    </location>
</feature>
<gene>
    <name evidence="1" type="primary">apaG</name>
    <name type="ordered locus">SCH_0084</name>
</gene>
<accession>Q57TH1</accession>
<organism>
    <name type="scientific">Salmonella choleraesuis (strain SC-B67)</name>
    <dbReference type="NCBI Taxonomy" id="321314"/>
    <lineage>
        <taxon>Bacteria</taxon>
        <taxon>Pseudomonadati</taxon>
        <taxon>Pseudomonadota</taxon>
        <taxon>Gammaproteobacteria</taxon>
        <taxon>Enterobacterales</taxon>
        <taxon>Enterobacteriaceae</taxon>
        <taxon>Salmonella</taxon>
    </lineage>
</organism>